<sequence>GDCSCEGQICKCGYRVSPGKSGCACTCRNAK</sequence>
<name>CS_CONST</name>
<keyword id="KW-1015">Disulfide bond</keyword>
<keyword id="KW-0964">Secreted</keyword>
<keyword id="KW-0800">Toxin</keyword>
<organism>
    <name type="scientific">Conus striatus</name>
    <name type="common">Striated cone</name>
    <dbReference type="NCBI Taxonomy" id="6493"/>
    <lineage>
        <taxon>Eukaryota</taxon>
        <taxon>Metazoa</taxon>
        <taxon>Spiralia</taxon>
        <taxon>Lophotrochozoa</taxon>
        <taxon>Mollusca</taxon>
        <taxon>Gastropoda</taxon>
        <taxon>Caenogastropoda</taxon>
        <taxon>Neogastropoda</taxon>
        <taxon>Conoidea</taxon>
        <taxon>Conidae</taxon>
        <taxon>Conus</taxon>
        <taxon>Pionoconus</taxon>
    </lineage>
</organism>
<comment type="subcellular location">
    <subcellularLocation>
        <location evidence="1">Secreted</location>
    </subcellularLocation>
</comment>
<comment type="tissue specificity">
    <text evidence="2">Expressed by the venom duct.</text>
</comment>
<comment type="domain">
    <text>The cysteine framework is VIII (C-C-C-C-C-C-C-C-C-C).</text>
</comment>
<comment type="PTM">
    <text evidence="2">Contains 5 disulfide bonds.</text>
</comment>
<comment type="similarity">
    <text evidence="2">Belongs to the conotoxin S superfamily.</text>
</comment>
<protein>
    <recommendedName>
        <fullName>Conotoxin</fullName>
    </recommendedName>
</protein>
<feature type="peptide" id="PRO_0000345112" description="Conotoxin">
    <location>
        <begin position="1" status="less than"/>
        <end position="31"/>
    </location>
</feature>
<feature type="non-terminal residue">
    <location>
        <position position="1"/>
    </location>
</feature>
<reference key="1">
    <citation type="journal article" date="2006" name="Biochimie">
        <title>Analysis of expressed sequence tags from the venom ducts of Conus striatus: focusing on the expression profile of conotoxins.</title>
        <authorList>
            <person name="Pi C."/>
            <person name="Liu Y."/>
            <person name="Peng C."/>
            <person name="Jiang X."/>
            <person name="Liu J."/>
            <person name="Xu B."/>
            <person name="Yu X."/>
            <person name="Yu Y."/>
            <person name="Jiang X."/>
            <person name="Wang L."/>
            <person name="Dong M."/>
            <person name="Chen S."/>
            <person name="Xu A.-L."/>
        </authorList>
    </citation>
    <scope>NUCLEOTIDE SEQUENCE [MRNA]</scope>
    <source>
        <tissue>Venom duct</tissue>
    </source>
</reference>
<evidence type="ECO:0000250" key="1"/>
<evidence type="ECO:0000305" key="2"/>
<accession>Q45RU7</accession>
<proteinExistence type="evidence at transcript level"/>
<dbReference type="EMBL" id="DQ117950">
    <property type="protein sequence ID" value="AAZ38459.1"/>
    <property type="molecule type" value="mRNA"/>
</dbReference>
<dbReference type="ConoServer" id="1109">
    <property type="toxin name" value="conotoxin precursor"/>
</dbReference>
<dbReference type="GO" id="GO:0005576">
    <property type="term" value="C:extracellular region"/>
    <property type="evidence" value="ECO:0007669"/>
    <property type="project" value="UniProtKB-SubCell"/>
</dbReference>
<dbReference type="GO" id="GO:0090729">
    <property type="term" value="F:toxin activity"/>
    <property type="evidence" value="ECO:0007669"/>
    <property type="project" value="UniProtKB-KW"/>
</dbReference>